<proteinExistence type="inferred from homology"/>
<feature type="chain" id="PRO_0000125149" description="Large ribosomal subunit protein uL22">
    <location>
        <begin position="1"/>
        <end position="120"/>
    </location>
</feature>
<accession>Q8NT02</accession>
<accession>Q6M7N1</accession>
<sequence>MSDNITSASATARFVRVSPMKARRVIDLVRGKTVVEALSILKYAPQAASEPVAKVVASAAANAENNFGLDPRTLVISEAYANEGPTMKRFQPRAQGRAFQIRKRSSHITVVVESQKEGAN</sequence>
<organism>
    <name type="scientific">Corynebacterium glutamicum (strain ATCC 13032 / DSM 20300 / JCM 1318 / BCRC 11384 / CCUG 27702 / LMG 3730 / NBRC 12168 / NCIMB 10025 / NRRL B-2784 / 534)</name>
    <dbReference type="NCBI Taxonomy" id="196627"/>
    <lineage>
        <taxon>Bacteria</taxon>
        <taxon>Bacillati</taxon>
        <taxon>Actinomycetota</taxon>
        <taxon>Actinomycetes</taxon>
        <taxon>Mycobacteriales</taxon>
        <taxon>Corynebacteriaceae</taxon>
        <taxon>Corynebacterium</taxon>
    </lineage>
</organism>
<dbReference type="EMBL" id="BA000036">
    <property type="protein sequence ID" value="BAB97906.1"/>
    <property type="molecule type" value="Genomic_DNA"/>
</dbReference>
<dbReference type="EMBL" id="BX927149">
    <property type="protein sequence ID" value="CAF19222.1"/>
    <property type="molecule type" value="Genomic_DNA"/>
</dbReference>
<dbReference type="RefSeq" id="NP_599753.1">
    <property type="nucleotide sequence ID" value="NC_003450.3"/>
</dbReference>
<dbReference type="RefSeq" id="WP_003854297.1">
    <property type="nucleotide sequence ID" value="NC_006958.1"/>
</dbReference>
<dbReference type="SMR" id="Q8NT02"/>
<dbReference type="STRING" id="196627.cg0600"/>
<dbReference type="GeneID" id="1021515"/>
<dbReference type="KEGG" id="cgb:cg0600"/>
<dbReference type="KEGG" id="cgl:Cgl0513"/>
<dbReference type="PATRIC" id="fig|196627.13.peg.508"/>
<dbReference type="eggNOG" id="COG0091">
    <property type="taxonomic scope" value="Bacteria"/>
</dbReference>
<dbReference type="HOGENOM" id="CLU_083987_3_2_11"/>
<dbReference type="OrthoDB" id="9805969at2"/>
<dbReference type="BioCyc" id="CORYNE:G18NG-10075-MONOMER"/>
<dbReference type="Proteomes" id="UP000000582">
    <property type="component" value="Chromosome"/>
</dbReference>
<dbReference type="Proteomes" id="UP000001009">
    <property type="component" value="Chromosome"/>
</dbReference>
<dbReference type="GO" id="GO:0022625">
    <property type="term" value="C:cytosolic large ribosomal subunit"/>
    <property type="evidence" value="ECO:0007669"/>
    <property type="project" value="TreeGrafter"/>
</dbReference>
<dbReference type="GO" id="GO:0019843">
    <property type="term" value="F:rRNA binding"/>
    <property type="evidence" value="ECO:0007669"/>
    <property type="project" value="UniProtKB-UniRule"/>
</dbReference>
<dbReference type="GO" id="GO:0003735">
    <property type="term" value="F:structural constituent of ribosome"/>
    <property type="evidence" value="ECO:0007669"/>
    <property type="project" value="InterPro"/>
</dbReference>
<dbReference type="GO" id="GO:0006412">
    <property type="term" value="P:translation"/>
    <property type="evidence" value="ECO:0007669"/>
    <property type="project" value="UniProtKB-UniRule"/>
</dbReference>
<dbReference type="CDD" id="cd00336">
    <property type="entry name" value="Ribosomal_L22"/>
    <property type="match status" value="1"/>
</dbReference>
<dbReference type="FunFam" id="3.90.470.10:FF:000002">
    <property type="entry name" value="50S ribosomal protein L22"/>
    <property type="match status" value="1"/>
</dbReference>
<dbReference type="Gene3D" id="3.90.470.10">
    <property type="entry name" value="Ribosomal protein L22/L17"/>
    <property type="match status" value="1"/>
</dbReference>
<dbReference type="HAMAP" id="MF_01331_B">
    <property type="entry name" value="Ribosomal_uL22_B"/>
    <property type="match status" value="1"/>
</dbReference>
<dbReference type="InterPro" id="IPR001063">
    <property type="entry name" value="Ribosomal_uL22"/>
</dbReference>
<dbReference type="InterPro" id="IPR005727">
    <property type="entry name" value="Ribosomal_uL22_bac/chlpt-type"/>
</dbReference>
<dbReference type="InterPro" id="IPR047867">
    <property type="entry name" value="Ribosomal_uL22_bac/org-type"/>
</dbReference>
<dbReference type="InterPro" id="IPR018260">
    <property type="entry name" value="Ribosomal_uL22_CS"/>
</dbReference>
<dbReference type="InterPro" id="IPR036394">
    <property type="entry name" value="Ribosomal_uL22_sf"/>
</dbReference>
<dbReference type="NCBIfam" id="TIGR01044">
    <property type="entry name" value="rplV_bact"/>
    <property type="match status" value="1"/>
</dbReference>
<dbReference type="PANTHER" id="PTHR13501">
    <property type="entry name" value="CHLOROPLAST 50S RIBOSOMAL PROTEIN L22-RELATED"/>
    <property type="match status" value="1"/>
</dbReference>
<dbReference type="PANTHER" id="PTHR13501:SF8">
    <property type="entry name" value="LARGE RIBOSOMAL SUBUNIT PROTEIN UL22M"/>
    <property type="match status" value="1"/>
</dbReference>
<dbReference type="Pfam" id="PF00237">
    <property type="entry name" value="Ribosomal_L22"/>
    <property type="match status" value="1"/>
</dbReference>
<dbReference type="SUPFAM" id="SSF54843">
    <property type="entry name" value="Ribosomal protein L22"/>
    <property type="match status" value="1"/>
</dbReference>
<dbReference type="PROSITE" id="PS00464">
    <property type="entry name" value="RIBOSOMAL_L22"/>
    <property type="match status" value="1"/>
</dbReference>
<protein>
    <recommendedName>
        <fullName evidence="1">Large ribosomal subunit protein uL22</fullName>
    </recommendedName>
    <alternativeName>
        <fullName evidence="2">50S ribosomal protein L22</fullName>
    </alternativeName>
</protein>
<gene>
    <name evidence="1" type="primary">rplV</name>
    <name type="ordered locus">Cgl0513</name>
    <name type="ordered locus">cg0600</name>
</gene>
<keyword id="KW-1185">Reference proteome</keyword>
<keyword id="KW-0687">Ribonucleoprotein</keyword>
<keyword id="KW-0689">Ribosomal protein</keyword>
<keyword id="KW-0694">RNA-binding</keyword>
<keyword id="KW-0699">rRNA-binding</keyword>
<name>RL22_CORGL</name>
<comment type="function">
    <text evidence="1">This protein binds specifically to 23S rRNA; its binding is stimulated by other ribosomal proteins, e.g. L4, L17, and L20. It is important during the early stages of 50S assembly. It makes multiple contacts with different domains of the 23S rRNA in the assembled 50S subunit and ribosome (By similarity).</text>
</comment>
<comment type="function">
    <text evidence="1">The globular domain of the protein is located near the polypeptide exit tunnel on the outside of the subunit, while an extended beta-hairpin is found that lines the wall of the exit tunnel in the center of the 70S ribosome.</text>
</comment>
<comment type="subunit">
    <text evidence="1">Part of the 50S ribosomal subunit.</text>
</comment>
<comment type="similarity">
    <text evidence="1">Belongs to the universal ribosomal protein uL22 family.</text>
</comment>
<evidence type="ECO:0000255" key="1">
    <source>
        <dbReference type="HAMAP-Rule" id="MF_01331"/>
    </source>
</evidence>
<evidence type="ECO:0000305" key="2"/>
<reference key="1">
    <citation type="journal article" date="2003" name="Appl. Microbiol. Biotechnol.">
        <title>The Corynebacterium glutamicum genome: features and impacts on biotechnological processes.</title>
        <authorList>
            <person name="Ikeda M."/>
            <person name="Nakagawa S."/>
        </authorList>
    </citation>
    <scope>NUCLEOTIDE SEQUENCE [LARGE SCALE GENOMIC DNA]</scope>
    <source>
        <strain>ATCC 13032 / DSM 20300 / JCM 1318 / BCRC 11384 / CCUG 27702 / LMG 3730 / NBRC 12168 / NCIMB 10025 / NRRL B-2784 / 534</strain>
    </source>
</reference>
<reference key="2">
    <citation type="journal article" date="2003" name="J. Biotechnol.">
        <title>The complete Corynebacterium glutamicum ATCC 13032 genome sequence and its impact on the production of L-aspartate-derived amino acids and vitamins.</title>
        <authorList>
            <person name="Kalinowski J."/>
            <person name="Bathe B."/>
            <person name="Bartels D."/>
            <person name="Bischoff N."/>
            <person name="Bott M."/>
            <person name="Burkovski A."/>
            <person name="Dusch N."/>
            <person name="Eggeling L."/>
            <person name="Eikmanns B.J."/>
            <person name="Gaigalat L."/>
            <person name="Goesmann A."/>
            <person name="Hartmann M."/>
            <person name="Huthmacher K."/>
            <person name="Kraemer R."/>
            <person name="Linke B."/>
            <person name="McHardy A.C."/>
            <person name="Meyer F."/>
            <person name="Moeckel B."/>
            <person name="Pfefferle W."/>
            <person name="Puehler A."/>
            <person name="Rey D.A."/>
            <person name="Rueckert C."/>
            <person name="Rupp O."/>
            <person name="Sahm H."/>
            <person name="Wendisch V.F."/>
            <person name="Wiegraebe I."/>
            <person name="Tauch A."/>
        </authorList>
    </citation>
    <scope>NUCLEOTIDE SEQUENCE [LARGE SCALE GENOMIC DNA]</scope>
    <source>
        <strain>ATCC 13032 / DSM 20300 / JCM 1318 / BCRC 11384 / CCUG 27702 / LMG 3730 / NBRC 12168 / NCIMB 10025 / NRRL B-2784 / 534</strain>
    </source>
</reference>